<feature type="signal peptide" evidence="1">
    <location>
        <begin position="1"/>
        <end position="21"/>
    </location>
</feature>
<feature type="chain" id="PRO_0000013886" description="Uncharacterized protein YpeC">
    <location>
        <begin position="22"/>
        <end position="108"/>
    </location>
</feature>
<keyword id="KW-1185">Reference proteome</keyword>
<keyword id="KW-0732">Signal</keyword>
<organism>
    <name type="scientific">Escherichia coli (strain K12)</name>
    <dbReference type="NCBI Taxonomy" id="83333"/>
    <lineage>
        <taxon>Bacteria</taxon>
        <taxon>Pseudomonadati</taxon>
        <taxon>Pseudomonadota</taxon>
        <taxon>Gammaproteobacteria</taxon>
        <taxon>Enterobacterales</taxon>
        <taxon>Enterobacteriaceae</taxon>
        <taxon>Escherichia</taxon>
    </lineage>
</organism>
<accession>P64542</accession>
<accession>P76527</accession>
<accession>Q2MAJ7</accession>
<gene>
    <name type="primary">ypeC</name>
    <name type="ordered locus">b2390</name>
    <name type="ordered locus">JW2387</name>
</gene>
<name>YPEC_ECOLI</name>
<sequence length="108" mass="13263">MFRSLFLAAALMAFTPLAANAGEITLLPSIKLQIGDRDHYGNYWDGGHWRDRDYWHRNYEWRKNRWWRHDNGYHRGWDKRKAYERGYREGWRDRDDHRGKGRGHGHRH</sequence>
<protein>
    <recommendedName>
        <fullName>Uncharacterized protein YpeC</fullName>
    </recommendedName>
</protein>
<reference key="1">
    <citation type="journal article" date="1997" name="Science">
        <title>The complete genome sequence of Escherichia coli K-12.</title>
        <authorList>
            <person name="Blattner F.R."/>
            <person name="Plunkett G. III"/>
            <person name="Bloch C.A."/>
            <person name="Perna N.T."/>
            <person name="Burland V."/>
            <person name="Riley M."/>
            <person name="Collado-Vides J."/>
            <person name="Glasner J.D."/>
            <person name="Rode C.K."/>
            <person name="Mayhew G.F."/>
            <person name="Gregor J."/>
            <person name="Davis N.W."/>
            <person name="Kirkpatrick H.A."/>
            <person name="Goeden M.A."/>
            <person name="Rose D.J."/>
            <person name="Mau B."/>
            <person name="Shao Y."/>
        </authorList>
    </citation>
    <scope>NUCLEOTIDE SEQUENCE [LARGE SCALE GENOMIC DNA]</scope>
    <source>
        <strain>K12 / MG1655 / ATCC 47076</strain>
    </source>
</reference>
<reference key="2">
    <citation type="journal article" date="2006" name="Mol. Syst. Biol.">
        <title>Highly accurate genome sequences of Escherichia coli K-12 strains MG1655 and W3110.</title>
        <authorList>
            <person name="Hayashi K."/>
            <person name="Morooka N."/>
            <person name="Yamamoto Y."/>
            <person name="Fujita K."/>
            <person name="Isono K."/>
            <person name="Choi S."/>
            <person name="Ohtsubo E."/>
            <person name="Baba T."/>
            <person name="Wanner B.L."/>
            <person name="Mori H."/>
            <person name="Horiuchi T."/>
        </authorList>
    </citation>
    <scope>NUCLEOTIDE SEQUENCE [LARGE SCALE GENOMIC DNA]</scope>
    <source>
        <strain>K12 / W3110 / ATCC 27325 / DSM 5911</strain>
    </source>
</reference>
<evidence type="ECO:0000255" key="1"/>
<evidence type="ECO:0000305" key="2"/>
<dbReference type="EMBL" id="U00096">
    <property type="protein sequence ID" value="AAC75449.1"/>
    <property type="molecule type" value="Genomic_DNA"/>
</dbReference>
<dbReference type="EMBL" id="AP009048">
    <property type="protein sequence ID" value="BAE76709.1"/>
    <property type="molecule type" value="Genomic_DNA"/>
</dbReference>
<dbReference type="PIR" id="C65013">
    <property type="entry name" value="C65013"/>
</dbReference>
<dbReference type="RefSeq" id="NP_416891.1">
    <property type="nucleotide sequence ID" value="NC_000913.3"/>
</dbReference>
<dbReference type="RefSeq" id="WP_000490072.1">
    <property type="nucleotide sequence ID" value="NZ_STEB01000008.1"/>
</dbReference>
<dbReference type="BioGRID" id="4259182">
    <property type="interactions" value="37"/>
</dbReference>
<dbReference type="FunCoup" id="P64542">
    <property type="interactions" value="22"/>
</dbReference>
<dbReference type="IntAct" id="P64542">
    <property type="interactions" value="2"/>
</dbReference>
<dbReference type="STRING" id="511145.b2390"/>
<dbReference type="PaxDb" id="511145-b2390"/>
<dbReference type="EnsemblBacteria" id="AAC75449">
    <property type="protein sequence ID" value="AAC75449"/>
    <property type="gene ID" value="b2390"/>
</dbReference>
<dbReference type="GeneID" id="93774738"/>
<dbReference type="GeneID" id="946855"/>
<dbReference type="KEGG" id="ecj:JW2387"/>
<dbReference type="KEGG" id="eco:b2390"/>
<dbReference type="KEGG" id="ecoc:C3026_13285"/>
<dbReference type="PATRIC" id="fig|511145.12.peg.2488"/>
<dbReference type="EchoBASE" id="EB4128"/>
<dbReference type="eggNOG" id="ENOG5031Y28">
    <property type="taxonomic scope" value="Bacteria"/>
</dbReference>
<dbReference type="HOGENOM" id="CLU_135700_2_0_6"/>
<dbReference type="InParanoid" id="P64542"/>
<dbReference type="OMA" id="WRGDRWW"/>
<dbReference type="OrthoDB" id="9180720at2"/>
<dbReference type="PhylomeDB" id="P64542"/>
<dbReference type="BioCyc" id="EcoCyc:G7252-MONOMER"/>
<dbReference type="PRO" id="PR:P64542"/>
<dbReference type="Proteomes" id="UP000000625">
    <property type="component" value="Chromosome"/>
</dbReference>
<dbReference type="InterPro" id="IPR019638">
    <property type="entry name" value="DUF2502"/>
</dbReference>
<dbReference type="Pfam" id="PF10697">
    <property type="entry name" value="DUF2502"/>
    <property type="match status" value="1"/>
</dbReference>
<comment type="similarity">
    <text evidence="2">To E.coli YaaX.</text>
</comment>
<proteinExistence type="inferred from homology"/>